<feature type="chain" id="PRO_0000080662" description="Ubiquitin carboxyl-terminal hydrolase 30">
    <location>
        <begin position="1"/>
        <end position="517"/>
    </location>
</feature>
<feature type="topological domain" description="Mitochondrial intermembrane" evidence="2">
    <location>
        <begin position="1"/>
        <end position="35"/>
    </location>
</feature>
<feature type="transmembrane region" description="Helical" evidence="2">
    <location>
        <begin position="36"/>
        <end position="56"/>
    </location>
</feature>
<feature type="topological domain" description="Cytoplasmic" evidence="2">
    <location>
        <begin position="57"/>
        <end position="517"/>
    </location>
</feature>
<feature type="domain" description="USP">
    <location>
        <begin position="68"/>
        <end position="502"/>
    </location>
</feature>
<feature type="region of interest" description="Disordered" evidence="5">
    <location>
        <begin position="364"/>
        <end position="395"/>
    </location>
</feature>
<feature type="active site" description="Nucleophile" evidence="7 8 10">
    <location>
        <position position="77"/>
    </location>
</feature>
<feature type="active site" description="Proton acceptor" evidence="3 4">
    <location>
        <position position="452"/>
    </location>
</feature>
<feature type="cross-link" description="Glycyl lysine isopeptide (Lys-Gly) (interchain with G-Cter in ubiquitin)" evidence="8">
    <location>
        <position position="235"/>
    </location>
</feature>
<feature type="cross-link" description="Glycyl lysine isopeptide (Lys-Gly) (interchain with G-Cter in ubiquitin)" evidence="8">
    <location>
        <position position="289"/>
    </location>
</feature>
<feature type="sequence variant" id="VAR_059751" description="In dbSNP:rs16939904.">
    <original>H</original>
    <variation>R</variation>
    <location>
        <position position="357"/>
    </location>
</feature>
<feature type="mutagenesis site" description="No change in mitochondrial subcellular location; when associated with N-30 and N-33." evidence="7">
    <original>R</original>
    <variation>T</variation>
    <location>
        <position position="28"/>
    </location>
</feature>
<feature type="mutagenesis site" description="No effect on subcellular location; when associated with N-28 and N-33." evidence="7">
    <original>K</original>
    <variation>N</variation>
    <location>
        <position position="30"/>
    </location>
</feature>
<feature type="mutagenesis site" description="No effect on subcellular location; when associated with N-28 and N-30." evidence="7">
    <original>K</original>
    <variation>N</variation>
    <location>
        <position position="33"/>
    </location>
</feature>
<feature type="mutagenesis site" description="Loss of mitochondrial subcellular location. Located in the endoplasmic reticulum." evidence="7">
    <original>RKKRRK</original>
    <variation>NNASNN</variation>
    <location>
        <begin position="59"/>
        <end position="64"/>
    </location>
</feature>
<feature type="mutagenesis site" description="Loss of deubiquitinase activity and impaired ability to inhibit mitophagy. Increased TOMM20 ubiquitination." evidence="7 8 10">
    <original>C</original>
    <variation>S</variation>
    <location>
        <position position="77"/>
    </location>
</feature>
<feature type="strand" evidence="13">
    <location>
        <begin position="73"/>
        <end position="75"/>
    </location>
</feature>
<feature type="helix" evidence="13">
    <location>
        <begin position="77"/>
        <end position="87"/>
    </location>
</feature>
<feature type="helix" evidence="13">
    <location>
        <begin position="90"/>
        <end position="100"/>
    </location>
</feature>
<feature type="helix" evidence="13">
    <location>
        <begin position="101"/>
        <end position="104"/>
    </location>
</feature>
<feature type="helix" evidence="13">
    <location>
        <begin position="116"/>
        <end position="127"/>
    </location>
</feature>
<feature type="helix" evidence="13">
    <location>
        <begin position="141"/>
        <end position="150"/>
    </location>
</feature>
<feature type="strand" evidence="13">
    <location>
        <begin position="156"/>
        <end position="158"/>
    </location>
</feature>
<feature type="helix" evidence="13">
    <location>
        <begin position="162"/>
        <end position="178"/>
    </location>
</feature>
<feature type="strand" evidence="13">
    <location>
        <begin position="226"/>
        <end position="234"/>
    </location>
</feature>
<feature type="turn" evidence="13">
    <location>
        <begin position="235"/>
        <end position="237"/>
    </location>
</feature>
<feature type="strand" evidence="13">
    <location>
        <begin position="240"/>
        <end position="254"/>
    </location>
</feature>
<feature type="strand" evidence="15">
    <location>
        <begin position="259"/>
        <end position="261"/>
    </location>
</feature>
<feature type="helix" evidence="13">
    <location>
        <begin position="266"/>
        <end position="274"/>
    </location>
</feature>
<feature type="strand" evidence="13">
    <location>
        <begin position="277"/>
        <end position="282"/>
    </location>
</feature>
<feature type="strand" evidence="13">
    <location>
        <begin position="285"/>
        <end position="287"/>
    </location>
</feature>
<feature type="strand" evidence="13">
    <location>
        <begin position="306"/>
        <end position="316"/>
    </location>
</feature>
<feature type="strand" evidence="13">
    <location>
        <begin position="319"/>
        <end position="326"/>
    </location>
</feature>
<feature type="strand" evidence="13">
    <location>
        <begin position="328"/>
        <end position="330"/>
    </location>
</feature>
<feature type="strand" evidence="13">
    <location>
        <begin position="332"/>
        <end position="338"/>
    </location>
</feature>
<feature type="strand" evidence="13">
    <location>
        <begin position="347"/>
        <end position="350"/>
    </location>
</feature>
<feature type="helix" evidence="13">
    <location>
        <begin position="352"/>
        <end position="354"/>
    </location>
</feature>
<feature type="strand" evidence="13">
    <location>
        <begin position="355"/>
        <end position="357"/>
    </location>
</feature>
<feature type="strand" evidence="13">
    <location>
        <begin position="435"/>
        <end position="446"/>
    </location>
</feature>
<feature type="strand" evidence="13">
    <location>
        <begin position="448"/>
        <end position="450"/>
    </location>
</feature>
<feature type="strand" evidence="13">
    <location>
        <begin position="452"/>
        <end position="458"/>
    </location>
</feature>
<feature type="strand" evidence="14">
    <location>
        <begin position="463"/>
        <end position="465"/>
    </location>
</feature>
<feature type="strand" evidence="13">
    <location>
        <begin position="473"/>
        <end position="477"/>
    </location>
</feature>
<feature type="strand" evidence="13">
    <location>
        <begin position="480"/>
        <end position="484"/>
    </location>
</feature>
<feature type="helix" evidence="13">
    <location>
        <begin position="486"/>
        <end position="491"/>
    </location>
</feature>
<feature type="strand" evidence="13">
    <location>
        <begin position="494"/>
        <end position="502"/>
    </location>
</feature>
<dbReference type="EC" id="3.4.19.12" evidence="6"/>
<dbReference type="EMBL" id="AJ586136">
    <property type="protein sequence ID" value="CAE51936.1"/>
    <property type="molecule type" value="mRNA"/>
</dbReference>
<dbReference type="EMBL" id="BC004868">
    <property type="protein sequence ID" value="AAH04868.1"/>
    <property type="status" value="ALT_INIT"/>
    <property type="molecule type" value="mRNA"/>
</dbReference>
<dbReference type="EMBL" id="BC022094">
    <property type="protein sequence ID" value="AAH22094.2"/>
    <property type="molecule type" value="mRNA"/>
</dbReference>
<dbReference type="EMBL" id="AK027820">
    <property type="protein sequence ID" value="BAB55392.1"/>
    <property type="status" value="ALT_INIT"/>
    <property type="molecule type" value="mRNA"/>
</dbReference>
<dbReference type="CCDS" id="CCDS9123.2"/>
<dbReference type="RefSeq" id="NP_001288104.1">
    <property type="nucleotide sequence ID" value="NM_001301175.1"/>
</dbReference>
<dbReference type="RefSeq" id="NP_116052.2">
    <property type="nucleotide sequence ID" value="NM_032663.5"/>
</dbReference>
<dbReference type="RefSeq" id="XP_006719716.1">
    <property type="nucleotide sequence ID" value="XM_006719653.3"/>
</dbReference>
<dbReference type="PDB" id="5OHK">
    <property type="method" value="X-ray"/>
    <property type="resolution" value="2.34 A"/>
    <property type="chains" value="A=64-178, A=217-357, A=432-502"/>
</dbReference>
<dbReference type="PDB" id="5OHN">
    <property type="method" value="X-ray"/>
    <property type="resolution" value="3.60 A"/>
    <property type="chains" value="A/C=64-357, A/C=432-502"/>
</dbReference>
<dbReference type="PDB" id="5OHP">
    <property type="method" value="X-ray"/>
    <property type="resolution" value="2.80 A"/>
    <property type="chains" value="A=64-178, A=217-357, A=432-502"/>
</dbReference>
<dbReference type="PDB" id="8D0A">
    <property type="method" value="X-ray"/>
    <property type="resolution" value="3.19 A"/>
    <property type="chains" value="A=64-178, A=190-357, A=432-502"/>
</dbReference>
<dbReference type="PDB" id="8D1T">
    <property type="method" value="X-ray"/>
    <property type="resolution" value="2.94 A"/>
    <property type="chains" value="A=64-178, A=190-357, A=432-502"/>
</dbReference>
<dbReference type="PDBsum" id="5OHK"/>
<dbReference type="PDBsum" id="5OHN"/>
<dbReference type="PDBsum" id="5OHP"/>
<dbReference type="PDBsum" id="8D0A"/>
<dbReference type="PDBsum" id="8D1T"/>
<dbReference type="SMR" id="Q70CQ3"/>
<dbReference type="BioGRID" id="124238">
    <property type="interactions" value="137"/>
</dbReference>
<dbReference type="DIP" id="DIP-53578N"/>
<dbReference type="FunCoup" id="Q70CQ3">
    <property type="interactions" value="3365"/>
</dbReference>
<dbReference type="IntAct" id="Q70CQ3">
    <property type="interactions" value="58"/>
</dbReference>
<dbReference type="MINT" id="Q70CQ3"/>
<dbReference type="STRING" id="9606.ENSP00000257548"/>
<dbReference type="BindingDB" id="Q70CQ3"/>
<dbReference type="ChEMBL" id="CHEMBL4523357"/>
<dbReference type="MEROPS" id="C19.060"/>
<dbReference type="GlyGen" id="Q70CQ3">
    <property type="glycosylation" value="3 sites, 1 N-linked glycan (1 site)"/>
</dbReference>
<dbReference type="iPTMnet" id="Q70CQ3"/>
<dbReference type="PhosphoSitePlus" id="Q70CQ3"/>
<dbReference type="SwissPalm" id="Q70CQ3"/>
<dbReference type="BioMuta" id="USP30"/>
<dbReference type="DMDM" id="52000872"/>
<dbReference type="jPOST" id="Q70CQ3"/>
<dbReference type="MassIVE" id="Q70CQ3"/>
<dbReference type="PaxDb" id="9606-ENSP00000257548"/>
<dbReference type="PeptideAtlas" id="Q70CQ3"/>
<dbReference type="ProteomicsDB" id="68524"/>
<dbReference type="Pumba" id="Q70CQ3"/>
<dbReference type="Antibodypedia" id="1728">
    <property type="antibodies" value="170 antibodies from 26 providers"/>
</dbReference>
<dbReference type="DNASU" id="84749"/>
<dbReference type="Ensembl" id="ENST00000257548.10">
    <property type="protein sequence ID" value="ENSP00000257548.5"/>
    <property type="gene ID" value="ENSG00000135093.13"/>
</dbReference>
<dbReference type="GeneID" id="84749"/>
<dbReference type="KEGG" id="hsa:84749"/>
<dbReference type="MANE-Select" id="ENST00000257548.10">
    <property type="protein sequence ID" value="ENSP00000257548.5"/>
    <property type="RefSeq nucleotide sequence ID" value="NM_032663.5"/>
    <property type="RefSeq protein sequence ID" value="NP_116052.2"/>
</dbReference>
<dbReference type="UCSC" id="uc010sxi.3">
    <property type="organism name" value="human"/>
</dbReference>
<dbReference type="AGR" id="HGNC:20065"/>
<dbReference type="CTD" id="84749"/>
<dbReference type="DisGeNET" id="84749"/>
<dbReference type="GeneCards" id="USP30"/>
<dbReference type="HGNC" id="HGNC:20065">
    <property type="gene designation" value="USP30"/>
</dbReference>
<dbReference type="HPA" id="ENSG00000135093">
    <property type="expression patterns" value="Low tissue specificity"/>
</dbReference>
<dbReference type="MalaCards" id="USP30"/>
<dbReference type="MIM" id="612492">
    <property type="type" value="gene"/>
</dbReference>
<dbReference type="neXtProt" id="NX_Q70CQ3"/>
<dbReference type="OpenTargets" id="ENSG00000135093"/>
<dbReference type="PharmGKB" id="PA134971149"/>
<dbReference type="VEuPathDB" id="HostDB:ENSG00000135093"/>
<dbReference type="eggNOG" id="KOG1867">
    <property type="taxonomic scope" value="Eukaryota"/>
</dbReference>
<dbReference type="GeneTree" id="ENSGT00550000075075"/>
<dbReference type="InParanoid" id="Q70CQ3"/>
<dbReference type="OMA" id="CEREGND"/>
<dbReference type="OrthoDB" id="2248014at2759"/>
<dbReference type="PAN-GO" id="Q70CQ3">
    <property type="GO annotations" value="5 GO annotations based on evolutionary models"/>
</dbReference>
<dbReference type="PhylomeDB" id="Q70CQ3"/>
<dbReference type="TreeFam" id="TF105781"/>
<dbReference type="PathwayCommons" id="Q70CQ3"/>
<dbReference type="Reactome" id="R-HSA-5689880">
    <property type="pathway name" value="Ub-specific processing proteases"/>
</dbReference>
<dbReference type="Reactome" id="R-HSA-9664873">
    <property type="pathway name" value="Pexophagy"/>
</dbReference>
<dbReference type="SignaLink" id="Q70CQ3"/>
<dbReference type="BioGRID-ORCS" id="84749">
    <property type="hits" value="18 hits in 1195 CRISPR screens"/>
</dbReference>
<dbReference type="ChiTaRS" id="USP30">
    <property type="organism name" value="human"/>
</dbReference>
<dbReference type="GenomeRNAi" id="84749"/>
<dbReference type="Pharos" id="Q70CQ3">
    <property type="development level" value="Tchem"/>
</dbReference>
<dbReference type="PRO" id="PR:Q70CQ3"/>
<dbReference type="Proteomes" id="UP000005640">
    <property type="component" value="Chromosome 12"/>
</dbReference>
<dbReference type="RNAct" id="Q70CQ3">
    <property type="molecule type" value="protein"/>
</dbReference>
<dbReference type="Bgee" id="ENSG00000135093">
    <property type="expression patterns" value="Expressed in kidney epithelium and 185 other cell types or tissues"/>
</dbReference>
<dbReference type="ExpressionAtlas" id="Q70CQ3">
    <property type="expression patterns" value="baseline and differential"/>
</dbReference>
<dbReference type="GO" id="GO:0005829">
    <property type="term" value="C:cytosol"/>
    <property type="evidence" value="ECO:0000318"/>
    <property type="project" value="GO_Central"/>
</dbReference>
<dbReference type="GO" id="GO:0005741">
    <property type="term" value="C:mitochondrial outer membrane"/>
    <property type="evidence" value="ECO:0000314"/>
    <property type="project" value="UniProtKB"/>
</dbReference>
<dbReference type="GO" id="GO:0005739">
    <property type="term" value="C:mitochondrion"/>
    <property type="evidence" value="ECO:0006056"/>
    <property type="project" value="FlyBase"/>
</dbReference>
<dbReference type="GO" id="GO:0005634">
    <property type="term" value="C:nucleus"/>
    <property type="evidence" value="ECO:0000318"/>
    <property type="project" value="GO_Central"/>
</dbReference>
<dbReference type="GO" id="GO:0005778">
    <property type="term" value="C:peroxisomal membrane"/>
    <property type="evidence" value="ECO:0000304"/>
    <property type="project" value="Reactome"/>
</dbReference>
<dbReference type="GO" id="GO:0004843">
    <property type="term" value="F:cysteine-type deubiquitinase activity"/>
    <property type="evidence" value="ECO:0000314"/>
    <property type="project" value="UniProtKB"/>
</dbReference>
<dbReference type="GO" id="GO:0004197">
    <property type="term" value="F:cysteine-type endopeptidase activity"/>
    <property type="evidence" value="ECO:0000315"/>
    <property type="project" value="UniProtKB"/>
</dbReference>
<dbReference type="GO" id="GO:0101005">
    <property type="term" value="F:deubiquitinase activity"/>
    <property type="evidence" value="ECO:0000304"/>
    <property type="project" value="Reactome"/>
</dbReference>
<dbReference type="GO" id="GO:0000422">
    <property type="term" value="P:autophagy of mitochondrion"/>
    <property type="evidence" value="ECO:0000314"/>
    <property type="project" value="UniProtKB"/>
</dbReference>
<dbReference type="GO" id="GO:0008053">
    <property type="term" value="P:mitochondrial fusion"/>
    <property type="evidence" value="ECO:0000250"/>
    <property type="project" value="UniProtKB"/>
</dbReference>
<dbReference type="GO" id="GO:1901525">
    <property type="term" value="P:negative regulation of mitophagy"/>
    <property type="evidence" value="ECO:0007669"/>
    <property type="project" value="Ensembl"/>
</dbReference>
<dbReference type="GO" id="GO:0000425">
    <property type="term" value="P:pexophagy"/>
    <property type="evidence" value="ECO:0000304"/>
    <property type="project" value="Reactome"/>
</dbReference>
<dbReference type="GO" id="GO:0016579">
    <property type="term" value="P:protein deubiquitination"/>
    <property type="evidence" value="ECO:0000314"/>
    <property type="project" value="UniProtKB"/>
</dbReference>
<dbReference type="GO" id="GO:0035871">
    <property type="term" value="P:protein K11-linked deubiquitination"/>
    <property type="evidence" value="ECO:0000314"/>
    <property type="project" value="UniProtKB"/>
</dbReference>
<dbReference type="GO" id="GO:0044313">
    <property type="term" value="P:protein K6-linked deubiquitination"/>
    <property type="evidence" value="ECO:0000314"/>
    <property type="project" value="UniProtKB"/>
</dbReference>
<dbReference type="GO" id="GO:0006508">
    <property type="term" value="P:proteolysis"/>
    <property type="evidence" value="ECO:0007669"/>
    <property type="project" value="UniProtKB-KW"/>
</dbReference>
<dbReference type="GO" id="GO:0031647">
    <property type="term" value="P:regulation of protein stability"/>
    <property type="evidence" value="ECO:0000318"/>
    <property type="project" value="GO_Central"/>
</dbReference>
<dbReference type="CDD" id="cd02662">
    <property type="entry name" value="Peptidase_C19F"/>
    <property type="match status" value="1"/>
</dbReference>
<dbReference type="Gene3D" id="3.90.70.10">
    <property type="entry name" value="Cysteine proteinases"/>
    <property type="match status" value="1"/>
</dbReference>
<dbReference type="InterPro" id="IPR038765">
    <property type="entry name" value="Papain-like_cys_pep_sf"/>
</dbReference>
<dbReference type="InterPro" id="IPR050164">
    <property type="entry name" value="Peptidase_C19"/>
</dbReference>
<dbReference type="InterPro" id="IPR001394">
    <property type="entry name" value="Peptidase_C19_UCH"/>
</dbReference>
<dbReference type="InterPro" id="IPR018200">
    <property type="entry name" value="USP_CS"/>
</dbReference>
<dbReference type="InterPro" id="IPR028889">
    <property type="entry name" value="USP_dom"/>
</dbReference>
<dbReference type="PANTHER" id="PTHR24006">
    <property type="entry name" value="UBIQUITIN CARBOXYL-TERMINAL HYDROLASE"/>
    <property type="match status" value="1"/>
</dbReference>
<dbReference type="PANTHER" id="PTHR24006:SF888">
    <property type="entry name" value="UBIQUITIN CARBOXYL-TERMINAL HYDROLASE 30"/>
    <property type="match status" value="1"/>
</dbReference>
<dbReference type="Pfam" id="PF00443">
    <property type="entry name" value="UCH"/>
    <property type="match status" value="1"/>
</dbReference>
<dbReference type="SUPFAM" id="SSF54001">
    <property type="entry name" value="Cysteine proteinases"/>
    <property type="match status" value="1"/>
</dbReference>
<dbReference type="PROSITE" id="PS00972">
    <property type="entry name" value="USP_1"/>
    <property type="match status" value="1"/>
</dbReference>
<dbReference type="PROSITE" id="PS00973">
    <property type="entry name" value="USP_2"/>
    <property type="match status" value="1"/>
</dbReference>
<dbReference type="PROSITE" id="PS50235">
    <property type="entry name" value="USP_3"/>
    <property type="match status" value="1"/>
</dbReference>
<sequence length="517" mass="58503">MLSSRAEAAMTAADRAIQRFLRTGAAVRYKVMKNWGVIGGIAAALAAGIYVIWGPITERKKRRKGLVPGLVNLGNTCFMNSLLQGLSACPAFIRWLEEFTSQYSRDQKEPPSHQYLSLTLLHLLKALSCQEVTDDEVLDASCLLDVLRMYRWQISSFEEQDAHELFHVITSSLEDERDRQPRVTHLFDVHSLEQQSEITPKQITCRTRGSPHPTSNHWKSQHPFHGRLTSNMVCKHCEHQSPVRFDTFDSLSLSIPAATWGHPLTLDHCLHHFISSESVRDVVCDNCTKIEAKGTLNGEKVEHQRTTFVKQLKLGKLPQCLCIHLQRLSWSSHGTPLKRHEHVQFNEFLMMDIYKYHLLGHKPSQHNPKLNKNPGPTLELQDGPGAPTPVLNQPGAPKTQIFMNGACSPSLLPTLSAPMPFPLPVVPDYSSSTYLFRLMAVVVHHGDMHSGHFVTYRRSPPSARNPLSTSNQWLWVSDDTVRKASLQEVLSSSAYLLFYERVLSRMQHQSQECKSEE</sequence>
<reference key="1">
    <citation type="journal article" date="2004" name="Biochem. Biophys. Res. Commun.">
        <title>Cloning and enzymatic analysis of 22 novel human ubiquitin-specific proteases.</title>
        <authorList>
            <person name="Quesada V."/>
            <person name="Diaz-Perales A."/>
            <person name="Gutierrez-Fernandez A."/>
            <person name="Garabaya C."/>
            <person name="Cal S."/>
            <person name="Lopez-Otin C."/>
        </authorList>
    </citation>
    <scope>NUCLEOTIDE SEQUENCE [MRNA]</scope>
    <scope>TISSUE SPECIFICITY</scope>
    <scope>CATALYTIC ACTIVITY</scope>
</reference>
<reference key="2">
    <citation type="journal article" date="2004" name="Genome Res.">
        <title>The status, quality, and expansion of the NIH full-length cDNA project: the Mammalian Gene Collection (MGC).</title>
        <authorList>
            <consortium name="The MGC Project Team"/>
        </authorList>
    </citation>
    <scope>NUCLEOTIDE SEQUENCE [LARGE SCALE MRNA]</scope>
    <source>
        <tissue>Lung</tissue>
        <tissue>Skin</tissue>
    </source>
</reference>
<reference key="3">
    <citation type="journal article" date="2004" name="Nat. Genet.">
        <title>Complete sequencing and characterization of 21,243 full-length human cDNAs.</title>
        <authorList>
            <person name="Ota T."/>
            <person name="Suzuki Y."/>
            <person name="Nishikawa T."/>
            <person name="Otsuki T."/>
            <person name="Sugiyama T."/>
            <person name="Irie R."/>
            <person name="Wakamatsu A."/>
            <person name="Hayashi K."/>
            <person name="Sato H."/>
            <person name="Nagai K."/>
            <person name="Kimura K."/>
            <person name="Makita H."/>
            <person name="Sekine M."/>
            <person name="Obayashi M."/>
            <person name="Nishi T."/>
            <person name="Shibahara T."/>
            <person name="Tanaka T."/>
            <person name="Ishii S."/>
            <person name="Yamamoto J."/>
            <person name="Saito K."/>
            <person name="Kawai Y."/>
            <person name="Isono Y."/>
            <person name="Nakamura Y."/>
            <person name="Nagahari K."/>
            <person name="Murakami K."/>
            <person name="Yasuda T."/>
            <person name="Iwayanagi T."/>
            <person name="Wagatsuma M."/>
            <person name="Shiratori A."/>
            <person name="Sudo H."/>
            <person name="Hosoiri T."/>
            <person name="Kaku Y."/>
            <person name="Kodaira H."/>
            <person name="Kondo H."/>
            <person name="Sugawara M."/>
            <person name="Takahashi M."/>
            <person name="Kanda K."/>
            <person name="Yokoi T."/>
            <person name="Furuya T."/>
            <person name="Kikkawa E."/>
            <person name="Omura Y."/>
            <person name="Abe K."/>
            <person name="Kamihara K."/>
            <person name="Katsuta N."/>
            <person name="Sato K."/>
            <person name="Tanikawa M."/>
            <person name="Yamazaki M."/>
            <person name="Ninomiya K."/>
            <person name="Ishibashi T."/>
            <person name="Yamashita H."/>
            <person name="Murakawa K."/>
            <person name="Fujimori K."/>
            <person name="Tanai H."/>
            <person name="Kimata M."/>
            <person name="Watanabe M."/>
            <person name="Hiraoka S."/>
            <person name="Chiba Y."/>
            <person name="Ishida S."/>
            <person name="Ono Y."/>
            <person name="Takiguchi S."/>
            <person name="Watanabe S."/>
            <person name="Yosida M."/>
            <person name="Hotuta T."/>
            <person name="Kusano J."/>
            <person name="Kanehori K."/>
            <person name="Takahashi-Fujii A."/>
            <person name="Hara H."/>
            <person name="Tanase T.-O."/>
            <person name="Nomura Y."/>
            <person name="Togiya S."/>
            <person name="Komai F."/>
            <person name="Hara R."/>
            <person name="Takeuchi K."/>
            <person name="Arita M."/>
            <person name="Imose N."/>
            <person name="Musashino K."/>
            <person name="Yuuki H."/>
            <person name="Oshima A."/>
            <person name="Sasaki N."/>
            <person name="Aotsuka S."/>
            <person name="Yoshikawa Y."/>
            <person name="Matsunawa H."/>
            <person name="Ichihara T."/>
            <person name="Shiohata N."/>
            <person name="Sano S."/>
            <person name="Moriya S."/>
            <person name="Momiyama H."/>
            <person name="Satoh N."/>
            <person name="Takami S."/>
            <person name="Terashima Y."/>
            <person name="Suzuki O."/>
            <person name="Nakagawa S."/>
            <person name="Senoh A."/>
            <person name="Mizoguchi H."/>
            <person name="Goto Y."/>
            <person name="Shimizu F."/>
            <person name="Wakebe H."/>
            <person name="Hishigaki H."/>
            <person name="Watanabe T."/>
            <person name="Sugiyama A."/>
            <person name="Takemoto M."/>
            <person name="Kawakami B."/>
            <person name="Yamazaki M."/>
            <person name="Watanabe K."/>
            <person name="Kumagai A."/>
            <person name="Itakura S."/>
            <person name="Fukuzumi Y."/>
            <person name="Fujimori Y."/>
            <person name="Komiyama M."/>
            <person name="Tashiro H."/>
            <person name="Tanigami A."/>
            <person name="Fujiwara T."/>
            <person name="Ono T."/>
            <person name="Yamada K."/>
            <person name="Fujii Y."/>
            <person name="Ozaki K."/>
            <person name="Hirao M."/>
            <person name="Ohmori Y."/>
            <person name="Kawabata A."/>
            <person name="Hikiji T."/>
            <person name="Kobatake N."/>
            <person name="Inagaki H."/>
            <person name="Ikema Y."/>
            <person name="Okamoto S."/>
            <person name="Okitani R."/>
            <person name="Kawakami T."/>
            <person name="Noguchi S."/>
            <person name="Itoh T."/>
            <person name="Shigeta K."/>
            <person name="Senba T."/>
            <person name="Matsumura K."/>
            <person name="Nakajima Y."/>
            <person name="Mizuno T."/>
            <person name="Morinaga M."/>
            <person name="Sasaki M."/>
            <person name="Togashi T."/>
            <person name="Oyama M."/>
            <person name="Hata H."/>
            <person name="Watanabe M."/>
            <person name="Komatsu T."/>
            <person name="Mizushima-Sugano J."/>
            <person name="Satoh T."/>
            <person name="Shirai Y."/>
            <person name="Takahashi Y."/>
            <person name="Nakagawa K."/>
            <person name="Okumura K."/>
            <person name="Nagase T."/>
            <person name="Nomura N."/>
            <person name="Kikuchi H."/>
            <person name="Masuho Y."/>
            <person name="Yamashita R."/>
            <person name="Nakai K."/>
            <person name="Yada T."/>
            <person name="Nakamura Y."/>
            <person name="Ohara O."/>
            <person name="Isogai T."/>
            <person name="Sugano S."/>
        </authorList>
    </citation>
    <scope>NUCLEOTIDE SEQUENCE [LARGE SCALE MRNA] OF 24-517</scope>
    <source>
        <tissue>Placenta</tissue>
    </source>
</reference>
<reference key="4">
    <citation type="journal article" date="2008" name="Mol. Biol. Cell">
        <title>Regulation of mitochondrial morphology by USP30, a deubiquitinating enzyme present in the mitochondrial outer membrane.</title>
        <authorList>
            <person name="Nakamura N."/>
            <person name="Hirose S."/>
        </authorList>
    </citation>
    <scope>FUNCTION</scope>
    <scope>SUBCELLULAR LOCATION</scope>
    <scope>MUTAGENESIS OF ARG-28; LYS-30; LYS-33; 59-ARG--LYS-64 AND CYS-77</scope>
    <scope>ACTIVE SITE</scope>
</reference>
<reference key="5">
    <citation type="journal article" date="2014" name="Nature">
        <title>The mitochondrial deubiquitinase USP30 opposes parkin-mediated mitophagy.</title>
        <authorList>
            <person name="Bingol B."/>
            <person name="Tea J.S."/>
            <person name="Phu L."/>
            <person name="Reichelt M."/>
            <person name="Bakalarski C.E."/>
            <person name="Song Q."/>
            <person name="Foreman O."/>
            <person name="Kirkpatrick D.S."/>
            <person name="Sheng M."/>
        </authorList>
    </citation>
    <scope>FUNCTION</scope>
    <scope>SUBCELLULAR LOCATION</scope>
    <scope>ACTIVE SITE</scope>
    <scope>MUTAGENESIS OF CYS-77</scope>
    <scope>UBIQUITINATION AT LYS-235 AND LYS-289</scope>
</reference>
<reference key="6">
    <citation type="journal article" date="2015" name="EMBO J.">
        <title>Ubiquitin Ser65 phosphorylation affects ubiquitin structure, chain assembly and hydrolysis.</title>
        <authorList>
            <person name="Wauer T."/>
            <person name="Swatek K.N."/>
            <person name="Wagstaff J.L."/>
            <person name="Gladkova C."/>
            <person name="Pruneda J.N."/>
            <person name="Michel M.A."/>
            <person name="Gersch M."/>
            <person name="Johnson C.M."/>
            <person name="Freund S.M."/>
            <person name="Komander D."/>
        </authorList>
    </citation>
    <scope>FUNCTION</scope>
</reference>
<reference key="7">
    <citation type="journal article" date="2015" name="Nat. Cell Biol.">
        <title>USP30 and parkin homeostatically regulate atypical ubiquitin chains on mitochondria.</title>
        <authorList>
            <person name="Cunningham C.N."/>
            <person name="Baughman J.M."/>
            <person name="Phu L."/>
            <person name="Tea J.S."/>
            <person name="Yu C."/>
            <person name="Coons M."/>
            <person name="Kirkpatrick D.S."/>
            <person name="Bingol B."/>
            <person name="Corn J.E."/>
        </authorList>
    </citation>
    <scope>FUNCTION</scope>
    <scope>MUTAGENESIS OF CYS-77</scope>
    <scope>ACTIVE SITE</scope>
</reference>
<gene>
    <name evidence="12" type="primary">USP30</name>
</gene>
<organism>
    <name type="scientific">Homo sapiens</name>
    <name type="common">Human</name>
    <dbReference type="NCBI Taxonomy" id="9606"/>
    <lineage>
        <taxon>Eukaryota</taxon>
        <taxon>Metazoa</taxon>
        <taxon>Chordata</taxon>
        <taxon>Craniata</taxon>
        <taxon>Vertebrata</taxon>
        <taxon>Euteleostomi</taxon>
        <taxon>Mammalia</taxon>
        <taxon>Eutheria</taxon>
        <taxon>Euarchontoglires</taxon>
        <taxon>Primates</taxon>
        <taxon>Haplorrhini</taxon>
        <taxon>Catarrhini</taxon>
        <taxon>Hominidae</taxon>
        <taxon>Homo</taxon>
    </lineage>
</organism>
<evidence type="ECO:0000250" key="1">
    <source>
        <dbReference type="UniProtKB" id="Q3UN04"/>
    </source>
</evidence>
<evidence type="ECO:0000255" key="2"/>
<evidence type="ECO:0000255" key="3">
    <source>
        <dbReference type="PROSITE-ProRule" id="PRU10092"/>
    </source>
</evidence>
<evidence type="ECO:0000255" key="4">
    <source>
        <dbReference type="PROSITE-ProRule" id="PRU10093"/>
    </source>
</evidence>
<evidence type="ECO:0000256" key="5">
    <source>
        <dbReference type="SAM" id="MobiDB-lite"/>
    </source>
</evidence>
<evidence type="ECO:0000269" key="6">
    <source>
    </source>
</evidence>
<evidence type="ECO:0000269" key="7">
    <source>
    </source>
</evidence>
<evidence type="ECO:0000269" key="8">
    <source>
    </source>
</evidence>
<evidence type="ECO:0000269" key="9">
    <source>
    </source>
</evidence>
<evidence type="ECO:0000269" key="10">
    <source>
    </source>
</evidence>
<evidence type="ECO:0000305" key="11"/>
<evidence type="ECO:0000312" key="12">
    <source>
        <dbReference type="HGNC" id="HGNC:20065"/>
    </source>
</evidence>
<evidence type="ECO:0007829" key="13">
    <source>
        <dbReference type="PDB" id="5OHK"/>
    </source>
</evidence>
<evidence type="ECO:0007829" key="14">
    <source>
        <dbReference type="PDB" id="5OHP"/>
    </source>
</evidence>
<evidence type="ECO:0007829" key="15">
    <source>
        <dbReference type="PDB" id="8D1T"/>
    </source>
</evidence>
<keyword id="KW-0002">3D-structure</keyword>
<keyword id="KW-0378">Hydrolase</keyword>
<keyword id="KW-1017">Isopeptide bond</keyword>
<keyword id="KW-0472">Membrane</keyword>
<keyword id="KW-0496">Mitochondrion</keyword>
<keyword id="KW-1000">Mitochondrion outer membrane</keyword>
<keyword id="KW-0645">Protease</keyword>
<keyword id="KW-1267">Proteomics identification</keyword>
<keyword id="KW-1185">Reference proteome</keyword>
<keyword id="KW-0788">Thiol protease</keyword>
<keyword id="KW-0812">Transmembrane</keyword>
<keyword id="KW-1133">Transmembrane helix</keyword>
<keyword id="KW-0832">Ubl conjugation</keyword>
<keyword id="KW-0833">Ubl conjugation pathway</keyword>
<protein>
    <recommendedName>
        <fullName>Ubiquitin carboxyl-terminal hydrolase 30</fullName>
        <ecNumber evidence="6">3.4.19.12</ecNumber>
    </recommendedName>
    <alternativeName>
        <fullName>Deubiquitinating enzyme 30</fullName>
    </alternativeName>
    <alternativeName>
        <fullName>Ubiquitin thioesterase 30</fullName>
    </alternativeName>
    <alternativeName>
        <fullName>Ubiquitin-specific-processing protease 30</fullName>
        <shortName>Ub-specific protease 30</shortName>
    </alternativeName>
</protein>
<comment type="function">
    <text evidence="1 7 8 9 10">Deubiquitinating enzyme tethered to the mitochondrial outer membrane that acts as a key inhibitor of mitophagy by counteracting the action of parkin (PRKN): hydrolyzes ubiquitin attached by parkin on target proteins, such as RHOT1/MIRO1 and TOMM20, thereby blocking parkin's ability to drive mitophagy (PubMed:18287522, PubMed:24896179, PubMed:25527291, PubMed:25621951). Preferentially cleaves 'Lys-6'- and 'Lys-11'-linked polyubiquitin chains, 2 types of linkage that participate in mitophagic signaling (PubMed:25621951). Does not cleave efficiently polyubiquitin phosphorylated at 'Ser-65' (PubMed:25527291). Acts as a negative regulator of mitochondrial fusion by mediating deubiquitination of MFN1 and MFN2 (By similarity).</text>
</comment>
<comment type="catalytic activity">
    <reaction evidence="6">
        <text>Thiol-dependent hydrolysis of ester, thioester, amide, peptide and isopeptide bonds formed by the C-terminal Gly of ubiquitin (a 76-residue protein attached to proteins as an intracellular targeting signal).</text>
        <dbReference type="EC" id="3.4.19.12"/>
    </reaction>
</comment>
<comment type="activity regulation">
    <text evidence="1">Inhibited by the diterpenoid derivative 15-oxospiramilactone (S3).</text>
</comment>
<comment type="interaction">
    <interactant intactId="EBI-2512374">
        <id>Q70CQ3</id>
    </interactant>
    <interactant intactId="EBI-930964">
        <id>P54253</id>
        <label>ATXN1</label>
    </interactant>
    <organismsDiffer>false</organismsDiffer>
    <experiments>3</experiments>
</comment>
<comment type="interaction">
    <interactant intactId="EBI-2512374">
        <id>Q70CQ3</id>
    </interactant>
    <interactant intactId="EBI-17589229">
        <id>Q6NTF9-3</id>
        <label>RHBDD2</label>
    </interactant>
    <organismsDiffer>false</organismsDiffer>
    <experiments>3</experiments>
</comment>
<comment type="subcellular location">
    <subcellularLocation>
        <location evidence="7 8">Mitochondrion outer membrane</location>
    </subcellularLocation>
</comment>
<comment type="tissue specificity">
    <text evidence="6">Expressed in skeletal muscle, pancreas, liver and kidney.</text>
</comment>
<comment type="PTM">
    <text evidence="8">Ubiquitinated by parkin (PRKN) at Lys-235 and Lys-289, leading to its degradation.</text>
</comment>
<comment type="similarity">
    <text evidence="11">Belongs to the peptidase C19 family.</text>
</comment>
<comment type="sequence caution" evidence="11">
    <conflict type="erroneous initiation">
        <sequence resource="EMBL-CDS" id="AAH04868"/>
    </conflict>
</comment>
<comment type="sequence caution" evidence="11">
    <conflict type="erroneous initiation">
        <sequence resource="EMBL-CDS" id="BAB55392"/>
    </conflict>
</comment>
<proteinExistence type="evidence at protein level"/>
<name>UBP30_HUMAN</name>
<accession>Q70CQ3</accession>
<accession>Q8WTU7</accession>
<accession>Q96JX4</accession>
<accession>Q9BSS3</accession>